<proteinExistence type="inferred from homology"/>
<dbReference type="EC" id="3.1.3.11" evidence="1"/>
<dbReference type="EMBL" id="FM954972">
    <property type="protein sequence ID" value="CAV20054.1"/>
    <property type="molecule type" value="Genomic_DNA"/>
</dbReference>
<dbReference type="SMR" id="B7VKW7"/>
<dbReference type="STRING" id="575788.VS_2771"/>
<dbReference type="KEGG" id="vsp:VS_2771"/>
<dbReference type="eggNOG" id="COG0158">
    <property type="taxonomic scope" value="Bacteria"/>
</dbReference>
<dbReference type="HOGENOM" id="CLU_039977_2_2_6"/>
<dbReference type="UniPathway" id="UPA00138"/>
<dbReference type="Proteomes" id="UP000009100">
    <property type="component" value="Chromosome 1"/>
</dbReference>
<dbReference type="GO" id="GO:0005829">
    <property type="term" value="C:cytosol"/>
    <property type="evidence" value="ECO:0007669"/>
    <property type="project" value="TreeGrafter"/>
</dbReference>
<dbReference type="GO" id="GO:0042132">
    <property type="term" value="F:fructose 1,6-bisphosphate 1-phosphatase activity"/>
    <property type="evidence" value="ECO:0007669"/>
    <property type="project" value="UniProtKB-UniRule"/>
</dbReference>
<dbReference type="GO" id="GO:0000287">
    <property type="term" value="F:magnesium ion binding"/>
    <property type="evidence" value="ECO:0007669"/>
    <property type="project" value="UniProtKB-UniRule"/>
</dbReference>
<dbReference type="GO" id="GO:0030388">
    <property type="term" value="P:fructose 1,6-bisphosphate metabolic process"/>
    <property type="evidence" value="ECO:0007669"/>
    <property type="project" value="TreeGrafter"/>
</dbReference>
<dbReference type="GO" id="GO:0006002">
    <property type="term" value="P:fructose 6-phosphate metabolic process"/>
    <property type="evidence" value="ECO:0007669"/>
    <property type="project" value="TreeGrafter"/>
</dbReference>
<dbReference type="GO" id="GO:0006000">
    <property type="term" value="P:fructose metabolic process"/>
    <property type="evidence" value="ECO:0007669"/>
    <property type="project" value="TreeGrafter"/>
</dbReference>
<dbReference type="GO" id="GO:0006094">
    <property type="term" value="P:gluconeogenesis"/>
    <property type="evidence" value="ECO:0007669"/>
    <property type="project" value="UniProtKB-UniRule"/>
</dbReference>
<dbReference type="GO" id="GO:0005986">
    <property type="term" value="P:sucrose biosynthetic process"/>
    <property type="evidence" value="ECO:0007669"/>
    <property type="project" value="TreeGrafter"/>
</dbReference>
<dbReference type="CDD" id="cd00354">
    <property type="entry name" value="FBPase"/>
    <property type="match status" value="1"/>
</dbReference>
<dbReference type="FunFam" id="3.30.540.10:FF:000002">
    <property type="entry name" value="Fructose-1,6-bisphosphatase class 1"/>
    <property type="match status" value="1"/>
</dbReference>
<dbReference type="FunFam" id="3.40.190.80:FF:000001">
    <property type="entry name" value="Fructose-1,6-bisphosphatase class 1"/>
    <property type="match status" value="1"/>
</dbReference>
<dbReference type="Gene3D" id="3.40.190.80">
    <property type="match status" value="1"/>
</dbReference>
<dbReference type="Gene3D" id="3.30.540.10">
    <property type="entry name" value="Fructose-1,6-Bisphosphatase, subunit A, domain 1"/>
    <property type="match status" value="1"/>
</dbReference>
<dbReference type="HAMAP" id="MF_01855">
    <property type="entry name" value="FBPase_class1"/>
    <property type="match status" value="1"/>
</dbReference>
<dbReference type="InterPro" id="IPR044015">
    <property type="entry name" value="FBPase_C_dom"/>
</dbReference>
<dbReference type="InterPro" id="IPR000146">
    <property type="entry name" value="FBPase_class-1"/>
</dbReference>
<dbReference type="InterPro" id="IPR033391">
    <property type="entry name" value="FBPase_N"/>
</dbReference>
<dbReference type="InterPro" id="IPR028343">
    <property type="entry name" value="FBPtase"/>
</dbReference>
<dbReference type="InterPro" id="IPR020548">
    <property type="entry name" value="Fructose_bisphosphatase_AS"/>
</dbReference>
<dbReference type="NCBIfam" id="NF006778">
    <property type="entry name" value="PRK09293.1-1"/>
    <property type="match status" value="1"/>
</dbReference>
<dbReference type="NCBIfam" id="NF006779">
    <property type="entry name" value="PRK09293.1-3"/>
    <property type="match status" value="1"/>
</dbReference>
<dbReference type="PANTHER" id="PTHR11556">
    <property type="entry name" value="FRUCTOSE-1,6-BISPHOSPHATASE-RELATED"/>
    <property type="match status" value="1"/>
</dbReference>
<dbReference type="PANTHER" id="PTHR11556:SF35">
    <property type="entry name" value="SEDOHEPTULOSE-1,7-BISPHOSPHATASE, CHLOROPLASTIC"/>
    <property type="match status" value="1"/>
</dbReference>
<dbReference type="Pfam" id="PF00316">
    <property type="entry name" value="FBPase"/>
    <property type="match status" value="1"/>
</dbReference>
<dbReference type="Pfam" id="PF18913">
    <property type="entry name" value="FBPase_C"/>
    <property type="match status" value="1"/>
</dbReference>
<dbReference type="PIRSF" id="PIRSF500210">
    <property type="entry name" value="FBPtase"/>
    <property type="match status" value="1"/>
</dbReference>
<dbReference type="PIRSF" id="PIRSF000904">
    <property type="entry name" value="FBPtase_SBPase"/>
    <property type="match status" value="1"/>
</dbReference>
<dbReference type="PRINTS" id="PR00115">
    <property type="entry name" value="F16BPHPHTASE"/>
</dbReference>
<dbReference type="SUPFAM" id="SSF56655">
    <property type="entry name" value="Carbohydrate phosphatase"/>
    <property type="match status" value="1"/>
</dbReference>
<dbReference type="PROSITE" id="PS00124">
    <property type="entry name" value="FBPASE"/>
    <property type="match status" value="1"/>
</dbReference>
<sequence>MSEMRTLGEFIVEKQSDFPHASGDLSSLLSSIRLAAKIVNREINKAGLVDITGAVGTDNVQGEEQQKLDLYANDKFKAALEARDQVCGVASEEEDEAVAFNKELNKNAKYVVLMDPLDGSSNIDVNVSVGTIFSIYRRVSPVGTPPTQEDFLQPGHKQVAAGYVIYGSSTMLVYTTGAGVNGFTYDPSLGTFCLSHENMMIPDEGKIYSINEGNYIRFPTGVKKYIKYCQENEPSDNRPYTSRYIGSLVSDFHRNLLKGGIYLYPSTQSHPQGKLRLLYECNPIAFIMEQAGGIASDGAQRIMDIKPTELHQRVPFFVGSKNMVKKVEEFLELNRD</sequence>
<evidence type="ECO:0000255" key="1">
    <source>
        <dbReference type="HAMAP-Rule" id="MF_01855"/>
    </source>
</evidence>
<gene>
    <name evidence="1" type="primary">fbp</name>
    <name type="ordered locus">VS_2771</name>
</gene>
<comment type="catalytic activity">
    <reaction evidence="1">
        <text>beta-D-fructose 1,6-bisphosphate + H2O = beta-D-fructose 6-phosphate + phosphate</text>
        <dbReference type="Rhea" id="RHEA:11064"/>
        <dbReference type="ChEBI" id="CHEBI:15377"/>
        <dbReference type="ChEBI" id="CHEBI:32966"/>
        <dbReference type="ChEBI" id="CHEBI:43474"/>
        <dbReference type="ChEBI" id="CHEBI:57634"/>
        <dbReference type="EC" id="3.1.3.11"/>
    </reaction>
</comment>
<comment type="cofactor">
    <cofactor evidence="1">
        <name>Mg(2+)</name>
        <dbReference type="ChEBI" id="CHEBI:18420"/>
    </cofactor>
    <text evidence="1">Binds 2 magnesium ions per subunit.</text>
</comment>
<comment type="pathway">
    <text evidence="1">Carbohydrate biosynthesis; gluconeogenesis.</text>
</comment>
<comment type="subunit">
    <text evidence="1">Homotetramer.</text>
</comment>
<comment type="subcellular location">
    <subcellularLocation>
        <location evidence="1">Cytoplasm</location>
    </subcellularLocation>
</comment>
<comment type="similarity">
    <text evidence="1">Belongs to the FBPase class 1 family.</text>
</comment>
<protein>
    <recommendedName>
        <fullName evidence="1">Fructose-1,6-bisphosphatase class 1</fullName>
        <shortName evidence="1">FBPase class 1</shortName>
        <ecNumber evidence="1">3.1.3.11</ecNumber>
    </recommendedName>
    <alternativeName>
        <fullName evidence="1">D-fructose-1,6-bisphosphate 1-phosphohydrolase class 1</fullName>
    </alternativeName>
</protein>
<name>F16PA_VIBA3</name>
<feature type="chain" id="PRO_1000188687" description="Fructose-1,6-bisphosphatase class 1">
    <location>
        <begin position="1"/>
        <end position="336"/>
    </location>
</feature>
<feature type="binding site" evidence="1">
    <location>
        <position position="92"/>
    </location>
    <ligand>
        <name>Mg(2+)</name>
        <dbReference type="ChEBI" id="CHEBI:18420"/>
        <label>1</label>
    </ligand>
</feature>
<feature type="binding site" evidence="1">
    <location>
        <position position="115"/>
    </location>
    <ligand>
        <name>Mg(2+)</name>
        <dbReference type="ChEBI" id="CHEBI:18420"/>
        <label>1</label>
    </ligand>
</feature>
<feature type="binding site" evidence="1">
    <location>
        <position position="115"/>
    </location>
    <ligand>
        <name>Mg(2+)</name>
        <dbReference type="ChEBI" id="CHEBI:18420"/>
        <label>2</label>
    </ligand>
</feature>
<feature type="binding site" evidence="1">
    <location>
        <position position="117"/>
    </location>
    <ligand>
        <name>Mg(2+)</name>
        <dbReference type="ChEBI" id="CHEBI:18420"/>
        <label>1</label>
    </ligand>
</feature>
<feature type="binding site" evidence="1">
    <location>
        <begin position="118"/>
        <end position="121"/>
    </location>
    <ligand>
        <name>substrate</name>
    </ligand>
</feature>
<feature type="binding site" evidence="1">
    <location>
        <position position="118"/>
    </location>
    <ligand>
        <name>Mg(2+)</name>
        <dbReference type="ChEBI" id="CHEBI:18420"/>
        <label>2</label>
    </ligand>
</feature>
<feature type="binding site" evidence="1">
    <location>
        <position position="211"/>
    </location>
    <ligand>
        <name>substrate</name>
    </ligand>
</feature>
<feature type="binding site" evidence="1">
    <location>
        <position position="244"/>
    </location>
    <ligand>
        <name>substrate</name>
    </ligand>
</feature>
<feature type="binding site" evidence="1">
    <location>
        <begin position="262"/>
        <end position="264"/>
    </location>
    <ligand>
        <name>substrate</name>
    </ligand>
</feature>
<feature type="binding site" evidence="1">
    <location>
        <position position="274"/>
    </location>
    <ligand>
        <name>substrate</name>
    </ligand>
</feature>
<feature type="binding site" evidence="1">
    <location>
        <position position="280"/>
    </location>
    <ligand>
        <name>Mg(2+)</name>
        <dbReference type="ChEBI" id="CHEBI:18420"/>
        <label>2</label>
    </ligand>
</feature>
<organism>
    <name type="scientific">Vibrio atlanticus (strain LGP32)</name>
    <name type="common">Vibrio splendidus (strain Mel32)</name>
    <dbReference type="NCBI Taxonomy" id="575788"/>
    <lineage>
        <taxon>Bacteria</taxon>
        <taxon>Pseudomonadati</taxon>
        <taxon>Pseudomonadota</taxon>
        <taxon>Gammaproteobacteria</taxon>
        <taxon>Vibrionales</taxon>
        <taxon>Vibrionaceae</taxon>
        <taxon>Vibrio</taxon>
    </lineage>
</organism>
<keyword id="KW-0119">Carbohydrate metabolism</keyword>
<keyword id="KW-0963">Cytoplasm</keyword>
<keyword id="KW-0378">Hydrolase</keyword>
<keyword id="KW-0460">Magnesium</keyword>
<keyword id="KW-0479">Metal-binding</keyword>
<reference key="1">
    <citation type="submission" date="2009-02" db="EMBL/GenBank/DDBJ databases">
        <title>Vibrio splendidus str. LGP32 complete genome.</title>
        <authorList>
            <person name="Mazel D."/>
            <person name="Le Roux F."/>
        </authorList>
    </citation>
    <scope>NUCLEOTIDE SEQUENCE [LARGE SCALE GENOMIC DNA]</scope>
    <source>
        <strain>LGP32</strain>
    </source>
</reference>
<accession>B7VKW7</accession>